<proteinExistence type="evidence at transcript level"/>
<comment type="function">
    <text evidence="1">Binds directly to 23S ribosomal RNA and is necessary for the in vitro assembly process of the 50S ribosomal subunit. It is not involved in the protein synthesizing functions of that subunit (By similarity).</text>
</comment>
<comment type="subcellular location">
    <subcellularLocation>
        <location>Plastid</location>
        <location>Chloroplast</location>
    </subcellularLocation>
</comment>
<comment type="RNA editing">
    <location>
        <position position="29" evidence="2 3"/>
    </location>
    <location>
        <position position="97" evidence="2 3"/>
    </location>
    <text>The nonsense codon at position 97 is modified to a sense codon.</text>
</comment>
<comment type="similarity">
    <text evidence="4">Belongs to the bacterial ribosomal protein bL20 family.</text>
</comment>
<evidence type="ECO:0000250" key="1"/>
<evidence type="ECO:0000269" key="2">
    <source>
    </source>
</evidence>
<evidence type="ECO:0000269" key="3">
    <source>
    </source>
</evidence>
<evidence type="ECO:0000305" key="4"/>
<geneLocation type="chloroplast"/>
<protein>
    <recommendedName>
        <fullName evidence="4">Large ribosomal subunit protein bL20c</fullName>
    </recommendedName>
    <alternativeName>
        <fullName>50S ribosomal protein L20, chloroplastic</fullName>
    </alternativeName>
</protein>
<sequence>MTRVKRGYVARRRRKNILKLTSGFQGAHSTLFRTANQQGMKSLTSSHRDRGKRKRDFRRLWITRINAAARRSKKSYHTLIQELYKRKILLNRKMLAQIAILDTYCFSTLLGD</sequence>
<keyword id="KW-0150">Chloroplast</keyword>
<keyword id="KW-0934">Plastid</keyword>
<keyword id="KW-0687">Ribonucleoprotein</keyword>
<keyword id="KW-0689">Ribosomal protein</keyword>
<keyword id="KW-0691">RNA editing</keyword>
<keyword id="KW-0694">RNA-binding</keyword>
<keyword id="KW-0699">rRNA-binding</keyword>
<dbReference type="EMBL" id="AB086179">
    <property type="protein sequence ID" value="BAC55372.1"/>
    <property type="molecule type" value="Genomic_DNA"/>
</dbReference>
<dbReference type="EMBL" id="AB087459">
    <property type="protein sequence ID" value="BAC55468.1"/>
    <property type="molecule type" value="mRNA"/>
</dbReference>
<dbReference type="RefSeq" id="NP_777436.1">
    <property type="nucleotide sequence ID" value="NC_004543.1"/>
</dbReference>
<dbReference type="SMR" id="Q85CV5"/>
<dbReference type="GeneID" id="2553415"/>
<dbReference type="GO" id="GO:0009507">
    <property type="term" value="C:chloroplast"/>
    <property type="evidence" value="ECO:0007669"/>
    <property type="project" value="UniProtKB-SubCell"/>
</dbReference>
<dbReference type="GO" id="GO:1990904">
    <property type="term" value="C:ribonucleoprotein complex"/>
    <property type="evidence" value="ECO:0007669"/>
    <property type="project" value="UniProtKB-KW"/>
</dbReference>
<dbReference type="GO" id="GO:0005840">
    <property type="term" value="C:ribosome"/>
    <property type="evidence" value="ECO:0007669"/>
    <property type="project" value="UniProtKB-KW"/>
</dbReference>
<dbReference type="GO" id="GO:0019843">
    <property type="term" value="F:rRNA binding"/>
    <property type="evidence" value="ECO:0007669"/>
    <property type="project" value="UniProtKB-UniRule"/>
</dbReference>
<dbReference type="GO" id="GO:0003735">
    <property type="term" value="F:structural constituent of ribosome"/>
    <property type="evidence" value="ECO:0007669"/>
    <property type="project" value="InterPro"/>
</dbReference>
<dbReference type="GO" id="GO:0000027">
    <property type="term" value="P:ribosomal large subunit assembly"/>
    <property type="evidence" value="ECO:0007669"/>
    <property type="project" value="UniProtKB-UniRule"/>
</dbReference>
<dbReference type="GO" id="GO:0006412">
    <property type="term" value="P:translation"/>
    <property type="evidence" value="ECO:0007669"/>
    <property type="project" value="InterPro"/>
</dbReference>
<dbReference type="CDD" id="cd07026">
    <property type="entry name" value="Ribosomal_L20"/>
    <property type="match status" value="1"/>
</dbReference>
<dbReference type="FunFam" id="1.10.1900.20:FF:000001">
    <property type="entry name" value="50S ribosomal protein L20"/>
    <property type="match status" value="1"/>
</dbReference>
<dbReference type="Gene3D" id="6.10.160.10">
    <property type="match status" value="1"/>
</dbReference>
<dbReference type="Gene3D" id="1.10.1900.20">
    <property type="entry name" value="Ribosomal protein L20"/>
    <property type="match status" value="1"/>
</dbReference>
<dbReference type="HAMAP" id="MF_00382">
    <property type="entry name" value="Ribosomal_bL20"/>
    <property type="match status" value="1"/>
</dbReference>
<dbReference type="InterPro" id="IPR005813">
    <property type="entry name" value="Ribosomal_bL20"/>
</dbReference>
<dbReference type="InterPro" id="IPR049946">
    <property type="entry name" value="RIBOSOMAL_L20_CS"/>
</dbReference>
<dbReference type="InterPro" id="IPR035566">
    <property type="entry name" value="Ribosomal_protein_bL20_C"/>
</dbReference>
<dbReference type="NCBIfam" id="TIGR01032">
    <property type="entry name" value="rplT_bact"/>
    <property type="match status" value="1"/>
</dbReference>
<dbReference type="PANTHER" id="PTHR10986">
    <property type="entry name" value="39S RIBOSOMAL PROTEIN L20"/>
    <property type="match status" value="1"/>
</dbReference>
<dbReference type="Pfam" id="PF00453">
    <property type="entry name" value="Ribosomal_L20"/>
    <property type="match status" value="1"/>
</dbReference>
<dbReference type="PRINTS" id="PR00062">
    <property type="entry name" value="RIBOSOMALL20"/>
</dbReference>
<dbReference type="SUPFAM" id="SSF74731">
    <property type="entry name" value="Ribosomal protein L20"/>
    <property type="match status" value="1"/>
</dbReference>
<dbReference type="PROSITE" id="PS00937">
    <property type="entry name" value="RIBOSOMAL_L20"/>
    <property type="match status" value="1"/>
</dbReference>
<gene>
    <name type="primary">rpl20</name>
</gene>
<feature type="chain" id="PRO_0000177277" description="Large ribosomal subunit protein bL20c">
    <location>
        <begin position="1"/>
        <end position="112"/>
    </location>
</feature>
<name>RK20_ANTAG</name>
<organism>
    <name type="scientific">Anthoceros angustus</name>
    <name type="common">Hornwort</name>
    <name type="synonym">Anthoceros formosae</name>
    <dbReference type="NCBI Taxonomy" id="48387"/>
    <lineage>
        <taxon>Eukaryota</taxon>
        <taxon>Viridiplantae</taxon>
        <taxon>Streptophyta</taxon>
        <taxon>Embryophyta</taxon>
        <taxon>Anthocerotophyta</taxon>
        <taxon>Anthocerotopsida</taxon>
        <taxon>Anthocerotidae</taxon>
        <taxon>Anthocerotales</taxon>
        <taxon>Anthocerotaceae</taxon>
        <taxon>Anthoceros</taxon>
    </lineage>
</organism>
<accession>Q85CV5</accession>
<reference key="1">
    <citation type="journal article" date="2003" name="Nucleic Acids Res.">
        <title>The complete nucleotide sequence of the hornwort (Anthoceros formosae) chloroplast genome: insight into the earliest land plants.</title>
        <authorList>
            <person name="Kugita M."/>
            <person name="Kaneko A."/>
            <person name="Yamamoto Y."/>
            <person name="Takeya Y."/>
            <person name="Matsumoto T."/>
            <person name="Yoshinaga K."/>
        </authorList>
    </citation>
    <scope>NUCLEOTIDE SEQUENCE [LARGE SCALE GENOMIC DNA]</scope>
    <scope>RNA EDITING</scope>
</reference>
<reference key="2">
    <citation type="journal article" date="2003" name="Nucleic Acids Res.">
        <title>RNA editing in hornwort chloroplasts makes more than half the genes functional.</title>
        <authorList>
            <person name="Kugita M."/>
            <person name="Yamamoto Y."/>
            <person name="Fujikawa T."/>
            <person name="Matsumoto T."/>
            <person name="Yoshinaga K."/>
        </authorList>
    </citation>
    <scope>NUCLEOTIDE SEQUENCE [MRNA]</scope>
    <scope>RNA EDITING</scope>
    <source>
        <tissue>Thallus</tissue>
    </source>
</reference>